<feature type="chain" id="PRO_1000118067" description="Phosphopantetheine adenylyltransferase">
    <location>
        <begin position="1"/>
        <end position="163"/>
    </location>
</feature>
<feature type="binding site" evidence="1">
    <location>
        <begin position="10"/>
        <end position="11"/>
    </location>
    <ligand>
        <name>ATP</name>
        <dbReference type="ChEBI" id="CHEBI:30616"/>
    </ligand>
</feature>
<feature type="binding site" evidence="1">
    <location>
        <position position="10"/>
    </location>
    <ligand>
        <name>substrate</name>
    </ligand>
</feature>
<feature type="binding site" evidence="1">
    <location>
        <position position="18"/>
    </location>
    <ligand>
        <name>ATP</name>
        <dbReference type="ChEBI" id="CHEBI:30616"/>
    </ligand>
</feature>
<feature type="binding site" evidence="1">
    <location>
        <position position="42"/>
    </location>
    <ligand>
        <name>substrate</name>
    </ligand>
</feature>
<feature type="binding site" evidence="1">
    <location>
        <position position="74"/>
    </location>
    <ligand>
        <name>substrate</name>
    </ligand>
</feature>
<feature type="binding site" evidence="1">
    <location>
        <position position="88"/>
    </location>
    <ligand>
        <name>substrate</name>
    </ligand>
</feature>
<feature type="binding site" evidence="1">
    <location>
        <begin position="89"/>
        <end position="91"/>
    </location>
    <ligand>
        <name>ATP</name>
        <dbReference type="ChEBI" id="CHEBI:30616"/>
    </ligand>
</feature>
<feature type="binding site" evidence="1">
    <location>
        <position position="99"/>
    </location>
    <ligand>
        <name>ATP</name>
        <dbReference type="ChEBI" id="CHEBI:30616"/>
    </ligand>
</feature>
<feature type="binding site" evidence="1">
    <location>
        <begin position="124"/>
        <end position="130"/>
    </location>
    <ligand>
        <name>ATP</name>
        <dbReference type="ChEBI" id="CHEBI:30616"/>
    </ligand>
</feature>
<feature type="site" description="Transition state stabilizer" evidence="1">
    <location>
        <position position="18"/>
    </location>
</feature>
<comment type="function">
    <text evidence="1">Reversibly transfers an adenylyl group from ATP to 4'-phosphopantetheine, yielding dephospho-CoA (dPCoA) and pyrophosphate.</text>
</comment>
<comment type="catalytic activity">
    <reaction evidence="1">
        <text>(R)-4'-phosphopantetheine + ATP + H(+) = 3'-dephospho-CoA + diphosphate</text>
        <dbReference type="Rhea" id="RHEA:19801"/>
        <dbReference type="ChEBI" id="CHEBI:15378"/>
        <dbReference type="ChEBI" id="CHEBI:30616"/>
        <dbReference type="ChEBI" id="CHEBI:33019"/>
        <dbReference type="ChEBI" id="CHEBI:57328"/>
        <dbReference type="ChEBI" id="CHEBI:61723"/>
        <dbReference type="EC" id="2.7.7.3"/>
    </reaction>
</comment>
<comment type="cofactor">
    <cofactor evidence="1">
        <name>Mg(2+)</name>
        <dbReference type="ChEBI" id="CHEBI:18420"/>
    </cofactor>
</comment>
<comment type="pathway">
    <text evidence="1">Cofactor biosynthesis; coenzyme A biosynthesis; CoA from (R)-pantothenate: step 4/5.</text>
</comment>
<comment type="subunit">
    <text evidence="1">Homohexamer.</text>
</comment>
<comment type="subcellular location">
    <subcellularLocation>
        <location evidence="1">Cytoplasm</location>
    </subcellularLocation>
</comment>
<comment type="similarity">
    <text evidence="1">Belongs to the bacterial CoaD family.</text>
</comment>
<name>COAD_BACC2</name>
<reference key="1">
    <citation type="submission" date="2008-10" db="EMBL/GenBank/DDBJ databases">
        <title>Genome sequence of Bacillus cereus G9842.</title>
        <authorList>
            <person name="Dodson R.J."/>
            <person name="Durkin A.S."/>
            <person name="Rosovitz M.J."/>
            <person name="Rasko D.A."/>
            <person name="Hoffmaster A."/>
            <person name="Ravel J."/>
            <person name="Sutton G."/>
        </authorList>
    </citation>
    <scope>NUCLEOTIDE SEQUENCE [LARGE SCALE GENOMIC DNA]</scope>
    <source>
        <strain>G9842</strain>
    </source>
</reference>
<dbReference type="EC" id="2.7.7.3" evidence="1"/>
<dbReference type="EMBL" id="CP001186">
    <property type="protein sequence ID" value="ACK97094.1"/>
    <property type="molecule type" value="Genomic_DNA"/>
</dbReference>
<dbReference type="RefSeq" id="WP_000200601.1">
    <property type="nucleotide sequence ID" value="NC_011772.1"/>
</dbReference>
<dbReference type="SMR" id="B7IVG6"/>
<dbReference type="GeneID" id="92883649"/>
<dbReference type="KEGG" id="bcg:BCG9842_B1210"/>
<dbReference type="HOGENOM" id="CLU_100149_0_1_9"/>
<dbReference type="UniPathway" id="UPA00241">
    <property type="reaction ID" value="UER00355"/>
</dbReference>
<dbReference type="Proteomes" id="UP000006744">
    <property type="component" value="Chromosome"/>
</dbReference>
<dbReference type="GO" id="GO:0005737">
    <property type="term" value="C:cytoplasm"/>
    <property type="evidence" value="ECO:0007669"/>
    <property type="project" value="UniProtKB-SubCell"/>
</dbReference>
<dbReference type="GO" id="GO:0005524">
    <property type="term" value="F:ATP binding"/>
    <property type="evidence" value="ECO:0007669"/>
    <property type="project" value="UniProtKB-KW"/>
</dbReference>
<dbReference type="GO" id="GO:0004595">
    <property type="term" value="F:pantetheine-phosphate adenylyltransferase activity"/>
    <property type="evidence" value="ECO:0007669"/>
    <property type="project" value="UniProtKB-UniRule"/>
</dbReference>
<dbReference type="GO" id="GO:0015937">
    <property type="term" value="P:coenzyme A biosynthetic process"/>
    <property type="evidence" value="ECO:0007669"/>
    <property type="project" value="UniProtKB-UniRule"/>
</dbReference>
<dbReference type="CDD" id="cd02163">
    <property type="entry name" value="PPAT"/>
    <property type="match status" value="1"/>
</dbReference>
<dbReference type="FunFam" id="3.40.50.620:FF:000012">
    <property type="entry name" value="Phosphopantetheine adenylyltransferase"/>
    <property type="match status" value="1"/>
</dbReference>
<dbReference type="Gene3D" id="3.40.50.620">
    <property type="entry name" value="HUPs"/>
    <property type="match status" value="1"/>
</dbReference>
<dbReference type="HAMAP" id="MF_00151">
    <property type="entry name" value="PPAT_bact"/>
    <property type="match status" value="1"/>
</dbReference>
<dbReference type="InterPro" id="IPR004821">
    <property type="entry name" value="Cyt_trans-like"/>
</dbReference>
<dbReference type="InterPro" id="IPR001980">
    <property type="entry name" value="PPAT"/>
</dbReference>
<dbReference type="InterPro" id="IPR014729">
    <property type="entry name" value="Rossmann-like_a/b/a_fold"/>
</dbReference>
<dbReference type="NCBIfam" id="TIGR01510">
    <property type="entry name" value="coaD_prev_kdtB"/>
    <property type="match status" value="1"/>
</dbReference>
<dbReference type="NCBIfam" id="TIGR00125">
    <property type="entry name" value="cyt_tran_rel"/>
    <property type="match status" value="1"/>
</dbReference>
<dbReference type="PANTHER" id="PTHR21342">
    <property type="entry name" value="PHOSPHOPANTETHEINE ADENYLYLTRANSFERASE"/>
    <property type="match status" value="1"/>
</dbReference>
<dbReference type="PANTHER" id="PTHR21342:SF1">
    <property type="entry name" value="PHOSPHOPANTETHEINE ADENYLYLTRANSFERASE"/>
    <property type="match status" value="1"/>
</dbReference>
<dbReference type="Pfam" id="PF01467">
    <property type="entry name" value="CTP_transf_like"/>
    <property type="match status" value="1"/>
</dbReference>
<dbReference type="PRINTS" id="PR01020">
    <property type="entry name" value="LPSBIOSNTHSS"/>
</dbReference>
<dbReference type="SUPFAM" id="SSF52374">
    <property type="entry name" value="Nucleotidylyl transferase"/>
    <property type="match status" value="1"/>
</dbReference>
<accession>B7IVG6</accession>
<organism>
    <name type="scientific">Bacillus cereus (strain G9842)</name>
    <dbReference type="NCBI Taxonomy" id="405531"/>
    <lineage>
        <taxon>Bacteria</taxon>
        <taxon>Bacillati</taxon>
        <taxon>Bacillota</taxon>
        <taxon>Bacilli</taxon>
        <taxon>Bacillales</taxon>
        <taxon>Bacillaceae</taxon>
        <taxon>Bacillus</taxon>
        <taxon>Bacillus cereus group</taxon>
    </lineage>
</organism>
<sequence length="163" mass="18407">MTSIAISSGSFDPITLGHLDIIKRGAKVFDEVYVVVLNNSSKKPFFSVEERLELIREATKDIPNVKVDSHSGLLVEYAKMRNANAILRGLRAVSDFEYEMQITSMNRKLDENIETFFIMTNNQYSFLSSSIVKEVARYGGSVVDLVPPIVERALKEKFQTPLK</sequence>
<protein>
    <recommendedName>
        <fullName evidence="1">Phosphopantetheine adenylyltransferase</fullName>
        <ecNumber evidence="1">2.7.7.3</ecNumber>
    </recommendedName>
    <alternativeName>
        <fullName evidence="1">Dephospho-CoA pyrophosphorylase</fullName>
    </alternativeName>
    <alternativeName>
        <fullName evidence="1">Pantetheine-phosphate adenylyltransferase</fullName>
        <shortName evidence="1">PPAT</shortName>
    </alternativeName>
</protein>
<keyword id="KW-0067">ATP-binding</keyword>
<keyword id="KW-0173">Coenzyme A biosynthesis</keyword>
<keyword id="KW-0963">Cytoplasm</keyword>
<keyword id="KW-0460">Magnesium</keyword>
<keyword id="KW-0547">Nucleotide-binding</keyword>
<keyword id="KW-0548">Nucleotidyltransferase</keyword>
<keyword id="KW-0808">Transferase</keyword>
<proteinExistence type="inferred from homology"/>
<evidence type="ECO:0000255" key="1">
    <source>
        <dbReference type="HAMAP-Rule" id="MF_00151"/>
    </source>
</evidence>
<gene>
    <name evidence="1" type="primary">coaD</name>
    <name type="ordered locus">BCG9842_B1210</name>
</gene>